<dbReference type="EMBL" id="BC118358">
    <property type="protein sequence ID" value="AAI18359.1"/>
    <property type="molecule type" value="mRNA"/>
</dbReference>
<dbReference type="RefSeq" id="NP_001069771.1">
    <property type="nucleotide sequence ID" value="NM_001076303.2"/>
</dbReference>
<dbReference type="RefSeq" id="XP_015328215.1">
    <property type="nucleotide sequence ID" value="XM_015472729.1"/>
</dbReference>
<dbReference type="SMR" id="Q17QH6"/>
<dbReference type="FunCoup" id="Q17QH6">
    <property type="interactions" value="322"/>
</dbReference>
<dbReference type="STRING" id="9913.ENSBTAP00000021590"/>
<dbReference type="PaxDb" id="9913-ENSBTAP00000021590"/>
<dbReference type="Ensembl" id="ENSBTAT00000021590.5">
    <property type="protein sequence ID" value="ENSBTAP00000021590.3"/>
    <property type="gene ID" value="ENSBTAG00000016225.5"/>
</dbReference>
<dbReference type="GeneID" id="613991"/>
<dbReference type="KEGG" id="bta:613991"/>
<dbReference type="CTD" id="78989"/>
<dbReference type="VEuPathDB" id="HostDB:ENSBTAG00000016225"/>
<dbReference type="VGNC" id="VGNC:27578">
    <property type="gene designation" value="COLEC11"/>
</dbReference>
<dbReference type="eggNOG" id="KOG4297">
    <property type="taxonomic scope" value="Eukaryota"/>
</dbReference>
<dbReference type="GeneTree" id="ENSGT00940000159468"/>
<dbReference type="HOGENOM" id="CLU_049894_3_2_1"/>
<dbReference type="InParanoid" id="Q17QH6"/>
<dbReference type="OMA" id="ITMYFLC"/>
<dbReference type="OrthoDB" id="8066719at2759"/>
<dbReference type="TreeFam" id="TF330481"/>
<dbReference type="Reactome" id="R-BTA-166662">
    <property type="pathway name" value="Lectin pathway of complement activation"/>
</dbReference>
<dbReference type="Reactome" id="R-BTA-166663">
    <property type="pathway name" value="Initial triggering of complement"/>
</dbReference>
<dbReference type="Reactome" id="R-BTA-3000480">
    <property type="pathway name" value="Scavenging by Class A Receptors"/>
</dbReference>
<dbReference type="Proteomes" id="UP000009136">
    <property type="component" value="Chromosome 8"/>
</dbReference>
<dbReference type="Bgee" id="ENSBTAG00000016225">
    <property type="expression patterns" value="Expressed in liver and 49 other cell types or tissues"/>
</dbReference>
<dbReference type="GO" id="GO:0005581">
    <property type="term" value="C:collagen trimer"/>
    <property type="evidence" value="ECO:0007669"/>
    <property type="project" value="UniProtKB-KW"/>
</dbReference>
<dbReference type="GO" id="GO:0005615">
    <property type="term" value="C:extracellular space"/>
    <property type="evidence" value="ECO:0000250"/>
    <property type="project" value="UniProtKB"/>
</dbReference>
<dbReference type="GO" id="GO:0005509">
    <property type="term" value="F:calcium ion binding"/>
    <property type="evidence" value="ECO:0000250"/>
    <property type="project" value="UniProtKB"/>
</dbReference>
<dbReference type="GO" id="GO:0120153">
    <property type="term" value="F:calcium-dependent carbohydrate binding"/>
    <property type="evidence" value="ECO:0000250"/>
    <property type="project" value="UniProtKB"/>
</dbReference>
<dbReference type="GO" id="GO:0005537">
    <property type="term" value="F:D-mannose binding"/>
    <property type="evidence" value="ECO:0000250"/>
    <property type="project" value="UniProtKB"/>
</dbReference>
<dbReference type="GO" id="GO:0003677">
    <property type="term" value="F:DNA binding"/>
    <property type="evidence" value="ECO:0000250"/>
    <property type="project" value="UniProtKB"/>
</dbReference>
<dbReference type="GO" id="GO:0042806">
    <property type="term" value="F:fucose binding"/>
    <property type="evidence" value="ECO:0000250"/>
    <property type="project" value="UniProtKB"/>
</dbReference>
<dbReference type="GO" id="GO:0042802">
    <property type="term" value="F:identical protein binding"/>
    <property type="evidence" value="ECO:0007669"/>
    <property type="project" value="Ensembl"/>
</dbReference>
<dbReference type="GO" id="GO:0070492">
    <property type="term" value="F:oligosaccharide binding"/>
    <property type="evidence" value="ECO:0000250"/>
    <property type="project" value="UniProtKB"/>
</dbReference>
<dbReference type="GO" id="GO:0019730">
    <property type="term" value="P:antimicrobial humoral response"/>
    <property type="evidence" value="ECO:0000250"/>
    <property type="project" value="UniProtKB"/>
</dbReference>
<dbReference type="GO" id="GO:0001867">
    <property type="term" value="P:complement activation, lectin pathway"/>
    <property type="evidence" value="ECO:0000250"/>
    <property type="project" value="UniProtKB"/>
</dbReference>
<dbReference type="GO" id="GO:0032502">
    <property type="term" value="P:developmental process"/>
    <property type="evidence" value="ECO:0000250"/>
    <property type="project" value="UniProtKB"/>
</dbReference>
<dbReference type="GO" id="GO:1903028">
    <property type="term" value="P:positive regulation of opsonization"/>
    <property type="evidence" value="ECO:0007669"/>
    <property type="project" value="Ensembl"/>
</dbReference>
<dbReference type="GO" id="GO:0006508">
    <property type="term" value="P:proteolysis"/>
    <property type="evidence" value="ECO:0007669"/>
    <property type="project" value="Ensembl"/>
</dbReference>
<dbReference type="CDD" id="cd03591">
    <property type="entry name" value="CLECT_collectin_like"/>
    <property type="match status" value="1"/>
</dbReference>
<dbReference type="FunFam" id="3.10.100.10:FF:000005">
    <property type="entry name" value="collectin-11 isoform X1"/>
    <property type="match status" value="1"/>
</dbReference>
<dbReference type="Gene3D" id="3.10.100.10">
    <property type="entry name" value="Mannose-Binding Protein A, subunit A"/>
    <property type="match status" value="1"/>
</dbReference>
<dbReference type="InterPro" id="IPR001304">
    <property type="entry name" value="C-type_lectin-like"/>
</dbReference>
<dbReference type="InterPro" id="IPR016186">
    <property type="entry name" value="C-type_lectin-like/link_sf"/>
</dbReference>
<dbReference type="InterPro" id="IPR018378">
    <property type="entry name" value="C-type_lectin_CS"/>
</dbReference>
<dbReference type="InterPro" id="IPR051077">
    <property type="entry name" value="Ca-dependent_lectin"/>
</dbReference>
<dbReference type="InterPro" id="IPR008160">
    <property type="entry name" value="Collagen"/>
</dbReference>
<dbReference type="InterPro" id="IPR033990">
    <property type="entry name" value="Collectin_CTLD"/>
</dbReference>
<dbReference type="InterPro" id="IPR016187">
    <property type="entry name" value="CTDL_fold"/>
</dbReference>
<dbReference type="PANTHER" id="PTHR24024:SF14">
    <property type="entry name" value="COLLECTIN-11"/>
    <property type="match status" value="1"/>
</dbReference>
<dbReference type="PANTHER" id="PTHR24024">
    <property type="entry name" value="PULMONARY SURFACTANT-ASSOCIATED PROTEIN A"/>
    <property type="match status" value="1"/>
</dbReference>
<dbReference type="Pfam" id="PF01391">
    <property type="entry name" value="Collagen"/>
    <property type="match status" value="2"/>
</dbReference>
<dbReference type="Pfam" id="PF00059">
    <property type="entry name" value="Lectin_C"/>
    <property type="match status" value="1"/>
</dbReference>
<dbReference type="SMART" id="SM00034">
    <property type="entry name" value="CLECT"/>
    <property type="match status" value="1"/>
</dbReference>
<dbReference type="SUPFAM" id="SSF56436">
    <property type="entry name" value="C-type lectin-like"/>
    <property type="match status" value="1"/>
</dbReference>
<dbReference type="PROSITE" id="PS00615">
    <property type="entry name" value="C_TYPE_LECTIN_1"/>
    <property type="match status" value="1"/>
</dbReference>
<dbReference type="PROSITE" id="PS50041">
    <property type="entry name" value="C_TYPE_LECTIN_2"/>
    <property type="match status" value="1"/>
</dbReference>
<feature type="signal peptide" evidence="2">
    <location>
        <begin position="1"/>
        <end position="21"/>
    </location>
</feature>
<feature type="chain" id="PRO_0000315043" description="Collectin-11">
    <location>
        <begin position="22"/>
        <end position="267"/>
    </location>
</feature>
<feature type="domain" description="Collagen-like">
    <location>
        <begin position="49"/>
        <end position="108"/>
    </location>
</feature>
<feature type="domain" description="C-type lectin" evidence="3">
    <location>
        <begin position="145"/>
        <end position="261"/>
    </location>
</feature>
<feature type="region of interest" description="Disordered" evidence="4">
    <location>
        <begin position="40"/>
        <end position="109"/>
    </location>
</feature>
<feature type="coiled-coil region" evidence="2">
    <location>
        <begin position="110"/>
        <end position="144"/>
    </location>
</feature>
<feature type="compositionally biased region" description="Basic and acidic residues" evidence="4">
    <location>
        <begin position="41"/>
        <end position="50"/>
    </location>
</feature>
<feature type="compositionally biased region" description="Basic and acidic residues" evidence="4">
    <location>
        <begin position="62"/>
        <end position="71"/>
    </location>
</feature>
<feature type="binding site" evidence="1">
    <location>
        <position position="196"/>
    </location>
    <ligand>
        <name>a carbohydrate</name>
        <dbReference type="ChEBI" id="CHEBI:16646"/>
    </ligand>
</feature>
<feature type="binding site" evidence="1">
    <location>
        <position position="203"/>
    </location>
    <ligand>
        <name>Ca(2+)</name>
        <dbReference type="ChEBI" id="CHEBI:29108"/>
        <label>1</label>
    </ligand>
</feature>
<feature type="binding site" evidence="1">
    <location>
        <position position="207"/>
    </location>
    <ligand>
        <name>Ca(2+)</name>
        <dbReference type="ChEBI" id="CHEBI:29108"/>
        <label>1</label>
    </ligand>
</feature>
<feature type="binding site" evidence="1">
    <location>
        <position position="207"/>
    </location>
    <ligand>
        <name>Ca(2+)</name>
        <dbReference type="ChEBI" id="CHEBI:29108"/>
        <label>3</label>
    </ligand>
</feature>
<feature type="binding site" evidence="1">
    <location>
        <position position="228"/>
    </location>
    <ligand>
        <name>Ca(2+)</name>
        <dbReference type="ChEBI" id="CHEBI:29108"/>
        <label>2</label>
    </ligand>
</feature>
<feature type="binding site" evidence="1">
    <location>
        <position position="230"/>
    </location>
    <ligand>
        <name>Ca(2+)</name>
        <dbReference type="ChEBI" id="CHEBI:29108"/>
        <label>2</label>
    </ligand>
</feature>
<feature type="binding site" evidence="1">
    <location>
        <position position="231"/>
    </location>
    <ligand>
        <name>Ca(2+)</name>
        <dbReference type="ChEBI" id="CHEBI:29108"/>
        <label>1</label>
    </ligand>
</feature>
<feature type="binding site" evidence="1">
    <location>
        <position position="234"/>
    </location>
    <ligand>
        <name>Ca(2+)</name>
        <dbReference type="ChEBI" id="CHEBI:29108"/>
        <label>3</label>
    </ligand>
</feature>
<feature type="binding site" evidence="1">
    <location>
        <position position="236"/>
    </location>
    <ligand>
        <name>a carbohydrate</name>
        <dbReference type="ChEBI" id="CHEBI:16646"/>
    </ligand>
</feature>
<feature type="binding site" evidence="1">
    <location>
        <position position="236"/>
    </location>
    <ligand>
        <name>Ca(2+)</name>
        <dbReference type="ChEBI" id="CHEBI:29108"/>
        <label>1</label>
    </ligand>
</feature>
<feature type="binding site" evidence="1">
    <location>
        <position position="236"/>
    </location>
    <ligand>
        <name>Ca(2+)</name>
        <dbReference type="ChEBI" id="CHEBI:29108"/>
        <label>2</label>
    </ligand>
</feature>
<feature type="binding site" evidence="1">
    <location>
        <position position="237"/>
    </location>
    <ligand>
        <name>Ca(2+)</name>
        <dbReference type="ChEBI" id="CHEBI:29108"/>
        <label>1</label>
    </ligand>
</feature>
<feature type="binding site" evidence="1">
    <location>
        <position position="237"/>
    </location>
    <ligand>
        <name>Ca(2+)</name>
        <dbReference type="ChEBI" id="CHEBI:29108"/>
        <label>3</label>
    </ligand>
</feature>
<feature type="binding site" evidence="1">
    <location>
        <position position="240"/>
    </location>
    <ligand>
        <name>a carbohydrate</name>
        <dbReference type="ChEBI" id="CHEBI:16646"/>
    </ligand>
</feature>
<feature type="binding site" evidence="1">
    <location>
        <begin position="248"/>
        <end position="250"/>
    </location>
    <ligand>
        <name>a carbohydrate</name>
        <dbReference type="ChEBI" id="CHEBI:16646"/>
    </ligand>
</feature>
<feature type="binding site" evidence="1">
    <location>
        <position position="248"/>
    </location>
    <ligand>
        <name>Ca(2+)</name>
        <dbReference type="ChEBI" id="CHEBI:29108"/>
        <label>2</label>
    </ligand>
</feature>
<feature type="binding site" evidence="1">
    <location>
        <position position="249"/>
    </location>
    <ligand>
        <name>Ca(2+)</name>
        <dbReference type="ChEBI" id="CHEBI:29108"/>
        <label>2</label>
    </ligand>
</feature>
<feature type="disulfide bond" evidence="1 3">
    <location>
        <begin position="166"/>
        <end position="260"/>
    </location>
</feature>
<feature type="disulfide bond" evidence="1 3">
    <location>
        <begin position="238"/>
        <end position="252"/>
    </location>
</feature>
<keyword id="KW-0106">Calcium</keyword>
<keyword id="KW-0175">Coiled coil</keyword>
<keyword id="KW-0176">Collagen</keyword>
<keyword id="KW-0217">Developmental protein</keyword>
<keyword id="KW-1015">Disulfide bond</keyword>
<keyword id="KW-0391">Immunity</keyword>
<keyword id="KW-0399">Innate immunity</keyword>
<keyword id="KW-0430">Lectin</keyword>
<keyword id="KW-0465">Mannose-binding</keyword>
<keyword id="KW-0479">Metal-binding</keyword>
<keyword id="KW-1185">Reference proteome</keyword>
<keyword id="KW-0964">Secreted</keyword>
<keyword id="KW-0732">Signal</keyword>
<comment type="function">
    <text evidence="1">Lectin that plays a role in innate immunity, apoptosis and embryogenesis. Calcium-dependent lectin that binds self and non-self glycoproteins presenting high mannose oligosaccharides with at least one terminal alpha-1,2-linked mannose epitope. Primarily recognizes the terminal disaccharide of the glycan. Also recognizes a subset of fucosylated glycans and lipopolysaccharides. Plays a role in innate immunity through its ability to bind non-self sugars presented by microorganisms and to activate the complement through the recruitment of MAPS1. Also plays a role in apoptosis through its ability to bind in a calcium-independent manner the DNA present at the surface of apoptotic cells and to activate the complement in response to this binding. Finally, plays a role in development, probably serving as a guidance cue during the migration of neural crest cells and other cell types during embryogenesis.</text>
</comment>
<comment type="subunit">
    <text evidence="1">Homotrimer; disulfide-linked. Interacts with MASP1; probably triggers the lectin pathway of complement.</text>
</comment>
<comment type="subcellular location">
    <subcellularLocation>
        <location evidence="1">Secreted</location>
    </subcellularLocation>
</comment>
<comment type="similarity">
    <text evidence="5">Belongs to the COLEC10/COLEC11 family.</text>
</comment>
<evidence type="ECO:0000250" key="1">
    <source>
        <dbReference type="UniProtKB" id="Q9BWP8"/>
    </source>
</evidence>
<evidence type="ECO:0000255" key="2"/>
<evidence type="ECO:0000255" key="3">
    <source>
        <dbReference type="PROSITE-ProRule" id="PRU00040"/>
    </source>
</evidence>
<evidence type="ECO:0000256" key="4">
    <source>
        <dbReference type="SAM" id="MobiDB-lite"/>
    </source>
</evidence>
<evidence type="ECO:0000305" key="5"/>
<accession>Q17QH6</accession>
<protein>
    <recommendedName>
        <fullName>Collectin-11</fullName>
    </recommendedName>
    <alternativeName>
        <fullName>Collectin kidney protein 1</fullName>
        <shortName>CL-K1</shortName>
    </alternativeName>
</protein>
<name>COL11_BOVIN</name>
<gene>
    <name type="primary">COLEC11</name>
</gene>
<proteinExistence type="evidence at transcript level"/>
<organism>
    <name type="scientific">Bos taurus</name>
    <name type="common">Bovine</name>
    <dbReference type="NCBI Taxonomy" id="9913"/>
    <lineage>
        <taxon>Eukaryota</taxon>
        <taxon>Metazoa</taxon>
        <taxon>Chordata</taxon>
        <taxon>Craniata</taxon>
        <taxon>Vertebrata</taxon>
        <taxon>Euteleostomi</taxon>
        <taxon>Mammalia</taxon>
        <taxon>Eutheria</taxon>
        <taxon>Laurasiatheria</taxon>
        <taxon>Artiodactyla</taxon>
        <taxon>Ruminantia</taxon>
        <taxon>Pecora</taxon>
        <taxon>Bovidae</taxon>
        <taxon>Bovinae</taxon>
        <taxon>Bos</taxon>
    </lineage>
</organism>
<reference key="1">
    <citation type="submission" date="2006-06" db="EMBL/GenBank/DDBJ databases">
        <authorList>
            <consortium name="NIH - Mammalian Gene Collection (MGC) project"/>
        </authorList>
    </citation>
    <scope>NUCLEOTIDE SEQUENCE [LARGE SCALE MRNA]</scope>
    <source>
        <strain>Hereford</strain>
        <tissue>Fetal lung</tissue>
    </source>
</reference>
<sequence>MKRALALMGLAFLCVLRAGAAQQTVDDACSVQILVPGLKGDAGEKGDKGAPGRPGRVGPTGEKGDVGDKGQKGGVGRHGKIGPIGSKGEKGDSGDIGPPGPNGEPGIPCECSQLRKAIGEMDNQVTQLTAELKFIKNAVAGVRETEQKMYLLVKEEKRYLDAQLACQGRGGTLSMPKDEAANALLAAYITQAGLARVFIGINDLEREGAFVYADRSPMQTFSKWRSGEPNNAYDEEDCVELVASGGWNDVACHLTMHFLCEFDKEHV</sequence>